<evidence type="ECO:0000250" key="1">
    <source>
        <dbReference type="UniProtKB" id="Q9BYD3"/>
    </source>
</evidence>
<evidence type="ECO:0000256" key="2">
    <source>
        <dbReference type="SAM" id="MobiDB-lite"/>
    </source>
</evidence>
<evidence type="ECO:0000305" key="3"/>
<gene>
    <name type="primary">Mrpl4</name>
    <name type="ORF">MNCb-3848</name>
</gene>
<comment type="subunit">
    <text evidence="1">Component of the mitochondrial ribosome large subunit (39S) which comprises a 16S rRNA and about 50 distinct proteins. Interacts with MIEF1 upstream open reading frame protein.</text>
</comment>
<comment type="subcellular location">
    <subcellularLocation>
        <location evidence="1">Mitochondrion</location>
    </subcellularLocation>
</comment>
<comment type="similarity">
    <text evidence="3">Belongs to the universal ribosomal protein uL4 family.</text>
</comment>
<comment type="sequence caution" evidence="3">
    <conflict type="erroneous initiation">
        <sequence resource="EMBL-CDS" id="AAH37064"/>
    </conflict>
</comment>
<comment type="sequence caution" evidence="3">
    <conflict type="frameshift">
        <sequence resource="EMBL-CDS" id="BAA95082"/>
    </conflict>
</comment>
<proteinExistence type="evidence at protein level"/>
<sequence length="294" mass="33073">MLRLFQAASRASLRLSGSRVIHSLAEGAERPAEISEPRDSAGLLDPVLRKCELRIPVHRRPVQAWVESLRGFEQERIGLAELHPDVFATAPRLDIVHQVAIWQRNFRRISYANTKTRAEVSGGGRKPWQQKGSGRARHGSIRSPLWRGGGVAHGPRGPTSYYYMLPMKVRALGLKVALTVKLMQDDLHIVDSLELPTADPQYLTELAQYRHWGSSVLLVDLTHEEMPKNVVAATSGLNSFNLIPAVGLNVYSMLKHQTLVLTLPSVAFLEDKLLWQDSRYTPLYPFRLPYSDFP</sequence>
<feature type="chain" id="PRO_0000238950" description="Large ribosomal subunit protein uL4m">
    <location>
        <begin position="1"/>
        <end position="294"/>
    </location>
</feature>
<feature type="region of interest" description="Disordered" evidence="2">
    <location>
        <begin position="119"/>
        <end position="139"/>
    </location>
</feature>
<feature type="modified residue" description="Omega-N-methylarginine" evidence="1">
    <location>
        <position position="147"/>
    </location>
</feature>
<feature type="sequence conflict" description="In Ref. 2; BAA95082." evidence="3" ref="2">
    <original>R</original>
    <variation>L</variation>
    <location>
        <position position="147"/>
    </location>
</feature>
<feature type="sequence conflict" description="In Ref. 2; BAA95082." evidence="3" ref="2">
    <original>F</original>
    <variation>L</variation>
    <location>
        <position position="268"/>
    </location>
</feature>
<accession>Q9DCU6</accession>
<accession>Q811L8</accession>
<accession>Q8JZU9</accession>
<accession>Q9JJB3</accession>
<name>RM04_MOUSE</name>
<organism>
    <name type="scientific">Mus musculus</name>
    <name type="common">Mouse</name>
    <dbReference type="NCBI Taxonomy" id="10090"/>
    <lineage>
        <taxon>Eukaryota</taxon>
        <taxon>Metazoa</taxon>
        <taxon>Chordata</taxon>
        <taxon>Craniata</taxon>
        <taxon>Vertebrata</taxon>
        <taxon>Euteleostomi</taxon>
        <taxon>Mammalia</taxon>
        <taxon>Eutheria</taxon>
        <taxon>Euarchontoglires</taxon>
        <taxon>Glires</taxon>
        <taxon>Rodentia</taxon>
        <taxon>Myomorpha</taxon>
        <taxon>Muroidea</taxon>
        <taxon>Muridae</taxon>
        <taxon>Murinae</taxon>
        <taxon>Mus</taxon>
        <taxon>Mus</taxon>
    </lineage>
</organism>
<dbReference type="EMBL" id="AB049634">
    <property type="protein sequence ID" value="BAB40839.1"/>
    <property type="molecule type" value="mRNA"/>
</dbReference>
<dbReference type="EMBL" id="AB041599">
    <property type="protein sequence ID" value="BAA95082.1"/>
    <property type="status" value="ALT_FRAME"/>
    <property type="molecule type" value="mRNA"/>
</dbReference>
<dbReference type="EMBL" id="AK002464">
    <property type="protein sequence ID" value="BAB22118.1"/>
    <property type="molecule type" value="mRNA"/>
</dbReference>
<dbReference type="EMBL" id="BC037064">
    <property type="protein sequence ID" value="AAH37064.1"/>
    <property type="status" value="ALT_INIT"/>
    <property type="molecule type" value="mRNA"/>
</dbReference>
<dbReference type="EMBL" id="BC039983">
    <property type="protein sequence ID" value="AAH39983.2"/>
    <property type="molecule type" value="mRNA"/>
</dbReference>
<dbReference type="EMBL" id="BC061095">
    <property type="protein sequence ID" value="AAH61095.1"/>
    <property type="molecule type" value="mRNA"/>
</dbReference>
<dbReference type="CCDS" id="CCDS40548.1"/>
<dbReference type="RefSeq" id="NP_075656.2">
    <property type="nucleotide sequence ID" value="NM_023167.2"/>
</dbReference>
<dbReference type="SMR" id="Q9DCU6"/>
<dbReference type="BioGRID" id="211261">
    <property type="interactions" value="4"/>
</dbReference>
<dbReference type="ComplexPortal" id="CPX-5302">
    <property type="entry name" value="39S mitochondrial large ribosomal subunit"/>
</dbReference>
<dbReference type="FunCoup" id="Q9DCU6">
    <property type="interactions" value="1885"/>
</dbReference>
<dbReference type="STRING" id="10090.ENSMUSP00000003386"/>
<dbReference type="PhosphoSitePlus" id="Q9DCU6"/>
<dbReference type="SwissPalm" id="Q9DCU6"/>
<dbReference type="jPOST" id="Q9DCU6"/>
<dbReference type="PaxDb" id="10090-ENSMUSP00000003386"/>
<dbReference type="PeptideAtlas" id="Q9DCU6"/>
<dbReference type="ProteomicsDB" id="299828"/>
<dbReference type="Pumba" id="Q9DCU6"/>
<dbReference type="Antibodypedia" id="25237">
    <property type="antibodies" value="94 antibodies from 25 providers"/>
</dbReference>
<dbReference type="DNASU" id="66163"/>
<dbReference type="Ensembl" id="ENSMUST00000003386.7">
    <property type="protein sequence ID" value="ENSMUSP00000003386.6"/>
    <property type="gene ID" value="ENSMUSG00000003299.11"/>
</dbReference>
<dbReference type="GeneID" id="66163"/>
<dbReference type="KEGG" id="mmu:66163"/>
<dbReference type="UCSC" id="uc009oju.1">
    <property type="organism name" value="mouse"/>
</dbReference>
<dbReference type="AGR" id="MGI:2137210"/>
<dbReference type="CTD" id="51073"/>
<dbReference type="MGI" id="MGI:2137210">
    <property type="gene designation" value="Mrpl4"/>
</dbReference>
<dbReference type="VEuPathDB" id="HostDB:ENSMUSG00000003299"/>
<dbReference type="eggNOG" id="KOG1624">
    <property type="taxonomic scope" value="Eukaryota"/>
</dbReference>
<dbReference type="GeneTree" id="ENSGT00390000014512"/>
<dbReference type="HOGENOM" id="CLU_041575_3_3_1"/>
<dbReference type="InParanoid" id="Q9DCU6"/>
<dbReference type="OMA" id="WIENTDA"/>
<dbReference type="OrthoDB" id="275876at2759"/>
<dbReference type="PhylomeDB" id="Q9DCU6"/>
<dbReference type="TreeFam" id="TF313913"/>
<dbReference type="Reactome" id="R-MMU-5389840">
    <property type="pathway name" value="Mitochondrial translation elongation"/>
</dbReference>
<dbReference type="Reactome" id="R-MMU-5419276">
    <property type="pathway name" value="Mitochondrial translation termination"/>
</dbReference>
<dbReference type="BioGRID-ORCS" id="66163">
    <property type="hits" value="27 hits in 115 CRISPR screens"/>
</dbReference>
<dbReference type="ChiTaRS" id="Mrpl4">
    <property type="organism name" value="mouse"/>
</dbReference>
<dbReference type="PRO" id="PR:Q9DCU6"/>
<dbReference type="Proteomes" id="UP000000589">
    <property type="component" value="Chromosome 9"/>
</dbReference>
<dbReference type="RNAct" id="Q9DCU6">
    <property type="molecule type" value="protein"/>
</dbReference>
<dbReference type="Bgee" id="ENSMUSG00000003299">
    <property type="expression patterns" value="Expressed in interventricular septum and 272 other cell types or tissues"/>
</dbReference>
<dbReference type="ExpressionAtlas" id="Q9DCU6">
    <property type="expression patterns" value="baseline and differential"/>
</dbReference>
<dbReference type="GO" id="GO:0005743">
    <property type="term" value="C:mitochondrial inner membrane"/>
    <property type="evidence" value="ECO:0000303"/>
    <property type="project" value="ComplexPortal"/>
</dbReference>
<dbReference type="GO" id="GO:0005762">
    <property type="term" value="C:mitochondrial large ribosomal subunit"/>
    <property type="evidence" value="ECO:0000250"/>
    <property type="project" value="UniProtKB"/>
</dbReference>
<dbReference type="GO" id="GO:0005739">
    <property type="term" value="C:mitochondrion"/>
    <property type="evidence" value="ECO:0007005"/>
    <property type="project" value="MGI"/>
</dbReference>
<dbReference type="GO" id="GO:0003735">
    <property type="term" value="F:structural constituent of ribosome"/>
    <property type="evidence" value="ECO:0007669"/>
    <property type="project" value="InterPro"/>
</dbReference>
<dbReference type="GO" id="GO:0032543">
    <property type="term" value="P:mitochondrial translation"/>
    <property type="evidence" value="ECO:0000303"/>
    <property type="project" value="ComplexPortal"/>
</dbReference>
<dbReference type="FunFam" id="3.40.1370.10:FF:000005">
    <property type="entry name" value="39S ribosomal protein L4, mitochondrial"/>
    <property type="match status" value="1"/>
</dbReference>
<dbReference type="Gene3D" id="3.40.1370.10">
    <property type="match status" value="1"/>
</dbReference>
<dbReference type="HAMAP" id="MF_01328_B">
    <property type="entry name" value="Ribosomal_uL4_B"/>
    <property type="match status" value="1"/>
</dbReference>
<dbReference type="InterPro" id="IPR002136">
    <property type="entry name" value="Ribosomal_uL4"/>
</dbReference>
<dbReference type="InterPro" id="IPR013005">
    <property type="entry name" value="Ribosomal_uL4-like"/>
</dbReference>
<dbReference type="InterPro" id="IPR023574">
    <property type="entry name" value="Ribosomal_uL4_dom_sf"/>
</dbReference>
<dbReference type="NCBIfam" id="TIGR03953">
    <property type="entry name" value="rplD_bact"/>
    <property type="match status" value="1"/>
</dbReference>
<dbReference type="PANTHER" id="PTHR10746">
    <property type="entry name" value="50S RIBOSOMAL PROTEIN L4"/>
    <property type="match status" value="1"/>
</dbReference>
<dbReference type="PANTHER" id="PTHR10746:SF6">
    <property type="entry name" value="LARGE RIBOSOMAL SUBUNIT PROTEIN UL4M"/>
    <property type="match status" value="1"/>
</dbReference>
<dbReference type="Pfam" id="PF00573">
    <property type="entry name" value="Ribosomal_L4"/>
    <property type="match status" value="1"/>
</dbReference>
<dbReference type="SUPFAM" id="SSF52166">
    <property type="entry name" value="Ribosomal protein L4"/>
    <property type="match status" value="1"/>
</dbReference>
<reference key="1">
    <citation type="journal article" date="2001" name="J. Biol. Chem.">
        <title>Structural compensation for the deficit of rRNA with proteins in the mammalian mitochondrial ribosome. Systematic analysis of protein components of the large ribosomal subunit from mammalian mitochondria.</title>
        <authorList>
            <person name="Suzuki T."/>
            <person name="Terasaki M."/>
            <person name="Takemoto-Hori C."/>
            <person name="Hanada T."/>
            <person name="Ueda T."/>
            <person name="Wada A."/>
            <person name="Watanabe K."/>
        </authorList>
    </citation>
    <scope>NUCLEOTIDE SEQUENCE [MRNA]</scope>
</reference>
<reference key="2">
    <citation type="submission" date="2000-04" db="EMBL/GenBank/DDBJ databases">
        <title>Isolation of full-length cDNA clones from mouse brain cDNA library made by oligo-capping method.</title>
        <authorList>
            <person name="Osada N."/>
            <person name="Kusuda J."/>
            <person name="Tanuma R."/>
            <person name="Ito A."/>
            <person name="Hirata M."/>
            <person name="Sugano S."/>
            <person name="Hashimoto K."/>
        </authorList>
    </citation>
    <scope>NUCLEOTIDE SEQUENCE [LARGE SCALE MRNA]</scope>
    <source>
        <strain>C57BL/6J</strain>
        <tissue>Brain</tissue>
    </source>
</reference>
<reference key="3">
    <citation type="journal article" date="2005" name="Science">
        <title>The transcriptional landscape of the mammalian genome.</title>
        <authorList>
            <person name="Carninci P."/>
            <person name="Kasukawa T."/>
            <person name="Katayama S."/>
            <person name="Gough J."/>
            <person name="Frith M.C."/>
            <person name="Maeda N."/>
            <person name="Oyama R."/>
            <person name="Ravasi T."/>
            <person name="Lenhard B."/>
            <person name="Wells C."/>
            <person name="Kodzius R."/>
            <person name="Shimokawa K."/>
            <person name="Bajic V.B."/>
            <person name="Brenner S.E."/>
            <person name="Batalov S."/>
            <person name="Forrest A.R."/>
            <person name="Zavolan M."/>
            <person name="Davis M.J."/>
            <person name="Wilming L.G."/>
            <person name="Aidinis V."/>
            <person name="Allen J.E."/>
            <person name="Ambesi-Impiombato A."/>
            <person name="Apweiler R."/>
            <person name="Aturaliya R.N."/>
            <person name="Bailey T.L."/>
            <person name="Bansal M."/>
            <person name="Baxter L."/>
            <person name="Beisel K.W."/>
            <person name="Bersano T."/>
            <person name="Bono H."/>
            <person name="Chalk A.M."/>
            <person name="Chiu K.P."/>
            <person name="Choudhary V."/>
            <person name="Christoffels A."/>
            <person name="Clutterbuck D.R."/>
            <person name="Crowe M.L."/>
            <person name="Dalla E."/>
            <person name="Dalrymple B.P."/>
            <person name="de Bono B."/>
            <person name="Della Gatta G."/>
            <person name="di Bernardo D."/>
            <person name="Down T."/>
            <person name="Engstrom P."/>
            <person name="Fagiolini M."/>
            <person name="Faulkner G."/>
            <person name="Fletcher C.F."/>
            <person name="Fukushima T."/>
            <person name="Furuno M."/>
            <person name="Futaki S."/>
            <person name="Gariboldi M."/>
            <person name="Georgii-Hemming P."/>
            <person name="Gingeras T.R."/>
            <person name="Gojobori T."/>
            <person name="Green R.E."/>
            <person name="Gustincich S."/>
            <person name="Harbers M."/>
            <person name="Hayashi Y."/>
            <person name="Hensch T.K."/>
            <person name="Hirokawa N."/>
            <person name="Hill D."/>
            <person name="Huminiecki L."/>
            <person name="Iacono M."/>
            <person name="Ikeo K."/>
            <person name="Iwama A."/>
            <person name="Ishikawa T."/>
            <person name="Jakt M."/>
            <person name="Kanapin A."/>
            <person name="Katoh M."/>
            <person name="Kawasawa Y."/>
            <person name="Kelso J."/>
            <person name="Kitamura H."/>
            <person name="Kitano H."/>
            <person name="Kollias G."/>
            <person name="Krishnan S.P."/>
            <person name="Kruger A."/>
            <person name="Kummerfeld S.K."/>
            <person name="Kurochkin I.V."/>
            <person name="Lareau L.F."/>
            <person name="Lazarevic D."/>
            <person name="Lipovich L."/>
            <person name="Liu J."/>
            <person name="Liuni S."/>
            <person name="McWilliam S."/>
            <person name="Madan Babu M."/>
            <person name="Madera M."/>
            <person name="Marchionni L."/>
            <person name="Matsuda H."/>
            <person name="Matsuzawa S."/>
            <person name="Miki H."/>
            <person name="Mignone F."/>
            <person name="Miyake S."/>
            <person name="Morris K."/>
            <person name="Mottagui-Tabar S."/>
            <person name="Mulder N."/>
            <person name="Nakano N."/>
            <person name="Nakauchi H."/>
            <person name="Ng P."/>
            <person name="Nilsson R."/>
            <person name="Nishiguchi S."/>
            <person name="Nishikawa S."/>
            <person name="Nori F."/>
            <person name="Ohara O."/>
            <person name="Okazaki Y."/>
            <person name="Orlando V."/>
            <person name="Pang K.C."/>
            <person name="Pavan W.J."/>
            <person name="Pavesi G."/>
            <person name="Pesole G."/>
            <person name="Petrovsky N."/>
            <person name="Piazza S."/>
            <person name="Reed J."/>
            <person name="Reid J.F."/>
            <person name="Ring B.Z."/>
            <person name="Ringwald M."/>
            <person name="Rost B."/>
            <person name="Ruan Y."/>
            <person name="Salzberg S.L."/>
            <person name="Sandelin A."/>
            <person name="Schneider C."/>
            <person name="Schoenbach C."/>
            <person name="Sekiguchi K."/>
            <person name="Semple C.A."/>
            <person name="Seno S."/>
            <person name="Sessa L."/>
            <person name="Sheng Y."/>
            <person name="Shibata Y."/>
            <person name="Shimada H."/>
            <person name="Shimada K."/>
            <person name="Silva D."/>
            <person name="Sinclair B."/>
            <person name="Sperling S."/>
            <person name="Stupka E."/>
            <person name="Sugiura K."/>
            <person name="Sultana R."/>
            <person name="Takenaka Y."/>
            <person name="Taki K."/>
            <person name="Tammoja K."/>
            <person name="Tan S.L."/>
            <person name="Tang S."/>
            <person name="Taylor M.S."/>
            <person name="Tegner J."/>
            <person name="Teichmann S.A."/>
            <person name="Ueda H.R."/>
            <person name="van Nimwegen E."/>
            <person name="Verardo R."/>
            <person name="Wei C.L."/>
            <person name="Yagi K."/>
            <person name="Yamanishi H."/>
            <person name="Zabarovsky E."/>
            <person name="Zhu S."/>
            <person name="Zimmer A."/>
            <person name="Hide W."/>
            <person name="Bult C."/>
            <person name="Grimmond S.M."/>
            <person name="Teasdale R.D."/>
            <person name="Liu E.T."/>
            <person name="Brusic V."/>
            <person name="Quackenbush J."/>
            <person name="Wahlestedt C."/>
            <person name="Mattick J.S."/>
            <person name="Hume D.A."/>
            <person name="Kai C."/>
            <person name="Sasaki D."/>
            <person name="Tomaru Y."/>
            <person name="Fukuda S."/>
            <person name="Kanamori-Katayama M."/>
            <person name="Suzuki M."/>
            <person name="Aoki J."/>
            <person name="Arakawa T."/>
            <person name="Iida J."/>
            <person name="Imamura K."/>
            <person name="Itoh M."/>
            <person name="Kato T."/>
            <person name="Kawaji H."/>
            <person name="Kawagashira N."/>
            <person name="Kawashima T."/>
            <person name="Kojima M."/>
            <person name="Kondo S."/>
            <person name="Konno H."/>
            <person name="Nakano K."/>
            <person name="Ninomiya N."/>
            <person name="Nishio T."/>
            <person name="Okada M."/>
            <person name="Plessy C."/>
            <person name="Shibata K."/>
            <person name="Shiraki T."/>
            <person name="Suzuki S."/>
            <person name="Tagami M."/>
            <person name="Waki K."/>
            <person name="Watahiki A."/>
            <person name="Okamura-Oho Y."/>
            <person name="Suzuki H."/>
            <person name="Kawai J."/>
            <person name="Hayashizaki Y."/>
        </authorList>
    </citation>
    <scope>NUCLEOTIDE SEQUENCE [LARGE SCALE MRNA]</scope>
    <source>
        <strain>C57BL/6J</strain>
        <tissue>Kidney</tissue>
    </source>
</reference>
<reference key="4">
    <citation type="journal article" date="2004" name="Genome Res.">
        <title>The status, quality, and expansion of the NIH full-length cDNA project: the Mammalian Gene Collection (MGC).</title>
        <authorList>
            <consortium name="The MGC Project Team"/>
        </authorList>
    </citation>
    <scope>NUCLEOTIDE SEQUENCE [LARGE SCALE MRNA]</scope>
    <source>
        <strain>FVB/N</strain>
        <tissue>Brain</tissue>
        <tissue>Colon</tissue>
        <tissue>Mammary tumor</tissue>
    </source>
</reference>
<reference key="5">
    <citation type="journal article" date="2010" name="Cell">
        <title>A tissue-specific atlas of mouse protein phosphorylation and expression.</title>
        <authorList>
            <person name="Huttlin E.L."/>
            <person name="Jedrychowski M.P."/>
            <person name="Elias J.E."/>
            <person name="Goswami T."/>
            <person name="Rad R."/>
            <person name="Beausoleil S.A."/>
            <person name="Villen J."/>
            <person name="Haas W."/>
            <person name="Sowa M.E."/>
            <person name="Gygi S.P."/>
        </authorList>
    </citation>
    <scope>IDENTIFICATION BY MASS SPECTROMETRY [LARGE SCALE ANALYSIS]</scope>
    <source>
        <tissue>Brain</tissue>
        <tissue>Brown adipose tissue</tissue>
        <tissue>Heart</tissue>
        <tissue>Kidney</tissue>
        <tissue>Liver</tissue>
        <tissue>Pancreas</tissue>
        <tissue>Spleen</tissue>
        <tissue>Testis</tissue>
    </source>
</reference>
<keyword id="KW-0488">Methylation</keyword>
<keyword id="KW-0496">Mitochondrion</keyword>
<keyword id="KW-1185">Reference proteome</keyword>
<keyword id="KW-0687">Ribonucleoprotein</keyword>
<keyword id="KW-0689">Ribosomal protein</keyword>
<protein>
    <recommendedName>
        <fullName evidence="3">Large ribosomal subunit protein uL4m</fullName>
    </recommendedName>
    <alternativeName>
        <fullName>39S ribosomal protein L4, mitochondrial</fullName>
        <shortName>L4mt</shortName>
        <shortName>MRP-L4</shortName>
    </alternativeName>
</protein>